<gene>
    <name evidence="1" type="primary">matK</name>
</gene>
<evidence type="ECO:0000255" key="1">
    <source>
        <dbReference type="HAMAP-Rule" id="MF_01390"/>
    </source>
</evidence>
<geneLocation type="chloroplast"/>
<keyword id="KW-0150">Chloroplast</keyword>
<keyword id="KW-0507">mRNA processing</keyword>
<keyword id="KW-0934">Plastid</keyword>
<keyword id="KW-0694">RNA-binding</keyword>
<keyword id="KW-0819">tRNA processing</keyword>
<feature type="chain" id="PRO_0000143682" description="Maturase K">
    <location>
        <begin position="1"/>
        <end position="504"/>
    </location>
</feature>
<organism>
    <name type="scientific">Rorippa amphibia</name>
    <name type="common">Great yellow-cress</name>
    <name type="synonym">Nasturtium amphibium</name>
    <dbReference type="NCBI Taxonomy" id="65951"/>
    <lineage>
        <taxon>Eukaryota</taxon>
        <taxon>Viridiplantae</taxon>
        <taxon>Streptophyta</taxon>
        <taxon>Embryophyta</taxon>
        <taxon>Tracheophyta</taxon>
        <taxon>Spermatophyta</taxon>
        <taxon>Magnoliopsida</taxon>
        <taxon>eudicotyledons</taxon>
        <taxon>Gunneridae</taxon>
        <taxon>Pentapetalae</taxon>
        <taxon>rosids</taxon>
        <taxon>malvids</taxon>
        <taxon>Brassicales</taxon>
        <taxon>Brassicaceae</taxon>
        <taxon>Cardamineae</taxon>
        <taxon>Rorippa</taxon>
    </lineage>
</organism>
<dbReference type="EMBL" id="AF174530">
    <property type="protein sequence ID" value="AAG43408.1"/>
    <property type="molecule type" value="Genomic_DNA"/>
</dbReference>
<dbReference type="GO" id="GO:0009507">
    <property type="term" value="C:chloroplast"/>
    <property type="evidence" value="ECO:0007669"/>
    <property type="project" value="UniProtKB-SubCell"/>
</dbReference>
<dbReference type="GO" id="GO:0003723">
    <property type="term" value="F:RNA binding"/>
    <property type="evidence" value="ECO:0007669"/>
    <property type="project" value="UniProtKB-KW"/>
</dbReference>
<dbReference type="GO" id="GO:0006397">
    <property type="term" value="P:mRNA processing"/>
    <property type="evidence" value="ECO:0007669"/>
    <property type="project" value="UniProtKB-KW"/>
</dbReference>
<dbReference type="GO" id="GO:0008380">
    <property type="term" value="P:RNA splicing"/>
    <property type="evidence" value="ECO:0007669"/>
    <property type="project" value="UniProtKB-UniRule"/>
</dbReference>
<dbReference type="GO" id="GO:0008033">
    <property type="term" value="P:tRNA processing"/>
    <property type="evidence" value="ECO:0007669"/>
    <property type="project" value="UniProtKB-KW"/>
</dbReference>
<dbReference type="HAMAP" id="MF_01390">
    <property type="entry name" value="MatK"/>
    <property type="match status" value="1"/>
</dbReference>
<dbReference type="InterPro" id="IPR024937">
    <property type="entry name" value="Domain_X"/>
</dbReference>
<dbReference type="InterPro" id="IPR002866">
    <property type="entry name" value="Maturase_MatK"/>
</dbReference>
<dbReference type="InterPro" id="IPR024942">
    <property type="entry name" value="Maturase_MatK_N"/>
</dbReference>
<dbReference type="PANTHER" id="PTHR34811">
    <property type="entry name" value="MATURASE K"/>
    <property type="match status" value="1"/>
</dbReference>
<dbReference type="PANTHER" id="PTHR34811:SF1">
    <property type="entry name" value="MATURASE K"/>
    <property type="match status" value="1"/>
</dbReference>
<dbReference type="Pfam" id="PF01348">
    <property type="entry name" value="Intron_maturas2"/>
    <property type="match status" value="1"/>
</dbReference>
<dbReference type="Pfam" id="PF01824">
    <property type="entry name" value="MatK_N"/>
    <property type="match status" value="1"/>
</dbReference>
<name>MATK_RORAM</name>
<proteinExistence type="inferred from homology"/>
<protein>
    <recommendedName>
        <fullName evidence="1">Maturase K</fullName>
    </recommendedName>
    <alternativeName>
        <fullName evidence="1">Intron maturase</fullName>
    </alternativeName>
</protein>
<reference key="1">
    <citation type="journal article" date="2001" name="Am. J. Bot.">
        <title>Molecular systematics of the Brassicaceae: evidence from coding plastidic matK and nuclear Chs sequences.</title>
        <authorList>
            <person name="Koch M."/>
            <person name="Haubold B."/>
            <person name="Mitchell-Olds T."/>
        </authorList>
    </citation>
    <scope>NUCLEOTIDE SEQUENCE [GENOMIC DNA]</scope>
</reference>
<accession>Q9G1H4</accession>
<comment type="function">
    <text evidence="1">Usually encoded in the trnK tRNA gene intron. Probably assists in splicing its own and other chloroplast group II introns.</text>
</comment>
<comment type="subcellular location">
    <subcellularLocation>
        <location>Plastid</location>
        <location>Chloroplast</location>
    </subcellularLocation>
</comment>
<comment type="similarity">
    <text evidence="1">Belongs to the intron maturase 2 family. MatK subfamily.</text>
</comment>
<sequence length="504" mass="60164">MXXXXGYLEFDGARQQSFLYPLFFREYIYVLAYDHGLNRLNRNRSIFFENVDYEKKYSSLIVKRLILRMYEQNRLIIPSKDLNQNHFFGHTSLFYYQMISVLFAVIVEIPFSLRLGSSFEGKQFKKSYNLQSIHSIFPFLEDKLSHFNYVLDVVIPYPIHLEILVQTLRYRVKDASSLHFFRFCLYEYCNWKDFSIKKKSILNPRFFLFLYNSHVCEYESIFFFLRKRSSHLRSTSYEVLFERILFYGKIQHFLKVFINSFPAILGLLKDPFIHYVRYHGRCILATKDTPLLMNKWKYYFVNLCQCYFSVWFQSQKVNINQLSKDNLEFLGYLSSLRLNPLVVRSQMLENSFLIDNVRIKLDSKIPISSIIGSLAKDKFCNVLGHPISKAVWTDSSDSDILNRFVRISRNISHYYSGSSNKKNLYRIKYILRLCCVKTLARKHKSTVRAFLKRLGSGLLEEFLTGEDQVLSLIFPRSYYASKRLYRVRIWYLDILYLNDLVNHE</sequence>